<sequence length="180" mass="19524">MAKIGLFFGSNTGKTRKVAKSIKKRFDDETMSDAVNVNRVSAEDFAQYQFLILGTPTLGEGELPGLSSDCENESWEEFLPKIEGLDFSGKTVALFGLGDQVGYPENFLDAMGELHSFFTERGAKVVGAWSTDGYEFEGSTAVVDGKFVGLALDLDNQSGKTDERVAAWLAQIAPEFGLSL</sequence>
<protein>
    <recommendedName>
        <fullName>Flavodoxin B</fullName>
        <shortName>FldB</shortName>
    </recommendedName>
</protein>
<reference key="1">
    <citation type="journal article" date="1996" name="J. Biomol. NMR">
        <title>Possible role of a short extra loop of the long-chain flavodoxin from Azotobacter chroococcum in electron transfer to nitrogenase: complete 1H, 15N and 13C backbone assignments and secondary solution structure of the flavodoxin.</title>
        <authorList>
            <person name="Peelen S."/>
            <person name="Wijmenga S."/>
            <person name="Erbel P.J."/>
            <person name="Robson R.L."/>
            <person name="Eady R.R."/>
            <person name="Vervoort J."/>
        </authorList>
    </citation>
    <scope>NUCLEOTIDE SEQUENCE [GENOMIC DNA]</scope>
</reference>
<reference key="2">
    <citation type="journal article" date="1991" name="Biochem. J.">
        <title>Direct electrochemistry of two genetically distinct flavodoxins isolated from Azotobacter chroococcum grown under nitrogen-fixing conditions.</title>
        <authorList>
            <person name="Bagby S."/>
            <person name="Barker P.D."/>
            <person name="Hill H.A.O."/>
            <person name="Sanghera G.S."/>
            <person name="Dunbar B."/>
            <person name="Ashby G.A."/>
            <person name="Eady R.R."/>
            <person name="Thorneley R.N.F."/>
        </authorList>
    </citation>
    <scope>PROTEIN SEQUENCE OF 2-21</scope>
    <source>
        <strain>MCD 1155</strain>
    </source>
</reference>
<feature type="initiator methionine" description="Removed" evidence="2">
    <location>
        <position position="1"/>
    </location>
</feature>
<feature type="chain" id="PRO_0000171603" description="Flavodoxin B">
    <location>
        <begin position="2"/>
        <end position="180"/>
    </location>
</feature>
<feature type="domain" description="Flavodoxin-like" evidence="1">
    <location>
        <begin position="4"/>
        <end position="173"/>
    </location>
</feature>
<accession>P23001</accession>
<accession>P35708</accession>
<proteinExistence type="evidence at protein level"/>
<dbReference type="EMBL" id="M73019">
    <property type="protein sequence ID" value="AAB36613.1"/>
    <property type="molecule type" value="Genomic_DNA"/>
</dbReference>
<dbReference type="SMR" id="P23001"/>
<dbReference type="GO" id="GO:0009055">
    <property type="term" value="F:electron transfer activity"/>
    <property type="evidence" value="ECO:0007669"/>
    <property type="project" value="InterPro"/>
</dbReference>
<dbReference type="GO" id="GO:0010181">
    <property type="term" value="F:FMN binding"/>
    <property type="evidence" value="ECO:0007669"/>
    <property type="project" value="InterPro"/>
</dbReference>
<dbReference type="GO" id="GO:0016655">
    <property type="term" value="F:oxidoreductase activity, acting on NAD(P)H, quinone or similar compound as acceptor"/>
    <property type="evidence" value="ECO:0007669"/>
    <property type="project" value="UniProtKB-ARBA"/>
</dbReference>
<dbReference type="GO" id="GO:0009399">
    <property type="term" value="P:nitrogen fixation"/>
    <property type="evidence" value="ECO:0007669"/>
    <property type="project" value="UniProtKB-KW"/>
</dbReference>
<dbReference type="Gene3D" id="3.40.50.360">
    <property type="match status" value="1"/>
</dbReference>
<dbReference type="InterPro" id="IPR001094">
    <property type="entry name" value="Flavdoxin-like"/>
</dbReference>
<dbReference type="InterPro" id="IPR050619">
    <property type="entry name" value="Flavodoxin"/>
</dbReference>
<dbReference type="InterPro" id="IPR008254">
    <property type="entry name" value="Flavodoxin/NO_synth"/>
</dbReference>
<dbReference type="InterPro" id="IPR001226">
    <property type="entry name" value="Flavodoxin_CS"/>
</dbReference>
<dbReference type="InterPro" id="IPR010086">
    <property type="entry name" value="Flavodoxin_lc"/>
</dbReference>
<dbReference type="InterPro" id="IPR029039">
    <property type="entry name" value="Flavoprotein-like_sf"/>
</dbReference>
<dbReference type="NCBIfam" id="TIGR01752">
    <property type="entry name" value="flav_long"/>
    <property type="match status" value="1"/>
</dbReference>
<dbReference type="NCBIfam" id="NF006738">
    <property type="entry name" value="PRK09267.1-4"/>
    <property type="match status" value="1"/>
</dbReference>
<dbReference type="NCBIfam" id="NF006739">
    <property type="entry name" value="PRK09267.1-5"/>
    <property type="match status" value="1"/>
</dbReference>
<dbReference type="PANTHER" id="PTHR42809:SF1">
    <property type="entry name" value="FLAVODOXIN 1"/>
    <property type="match status" value="1"/>
</dbReference>
<dbReference type="PANTHER" id="PTHR42809">
    <property type="entry name" value="FLAVODOXIN 2"/>
    <property type="match status" value="1"/>
</dbReference>
<dbReference type="Pfam" id="PF00258">
    <property type="entry name" value="Flavodoxin_1"/>
    <property type="match status" value="1"/>
</dbReference>
<dbReference type="PIRSF" id="PIRSF038996">
    <property type="entry name" value="FldA"/>
    <property type="match status" value="1"/>
</dbReference>
<dbReference type="PRINTS" id="PR00369">
    <property type="entry name" value="FLAVODOXIN"/>
</dbReference>
<dbReference type="SUPFAM" id="SSF52218">
    <property type="entry name" value="Flavoproteins"/>
    <property type="match status" value="1"/>
</dbReference>
<dbReference type="PROSITE" id="PS00201">
    <property type="entry name" value="FLAVODOXIN"/>
    <property type="match status" value="1"/>
</dbReference>
<dbReference type="PROSITE" id="PS50902">
    <property type="entry name" value="FLAVODOXIN_LIKE"/>
    <property type="match status" value="1"/>
</dbReference>
<gene>
    <name type="primary">nifF</name>
</gene>
<keyword id="KW-0903">Direct protein sequencing</keyword>
<keyword id="KW-0249">Electron transport</keyword>
<keyword id="KW-0285">Flavoprotein</keyword>
<keyword id="KW-0288">FMN</keyword>
<keyword id="KW-0535">Nitrogen fixation</keyword>
<keyword id="KW-0813">Transport</keyword>
<evidence type="ECO:0000255" key="1">
    <source>
        <dbReference type="PROSITE-ProRule" id="PRU00088"/>
    </source>
</evidence>
<evidence type="ECO:0000269" key="2">
    <source>
    </source>
</evidence>
<evidence type="ECO:0000305" key="3"/>
<name>FLAV_AZOCH</name>
<comment type="function">
    <text>Low-potential electron donor to a number of redox enzymes. NifF is the electron donor to nitrogenase.</text>
</comment>
<comment type="cofactor">
    <cofactor>
        <name>FMN</name>
        <dbReference type="ChEBI" id="CHEBI:58210"/>
    </cofactor>
</comment>
<comment type="similarity">
    <text evidence="3">Belongs to the flavodoxin family.</text>
</comment>
<organism>
    <name type="scientific">Azotobacter chroococcum mcd 1</name>
    <dbReference type="NCBI Taxonomy" id="355"/>
    <lineage>
        <taxon>Bacteria</taxon>
        <taxon>Pseudomonadati</taxon>
        <taxon>Pseudomonadota</taxon>
        <taxon>Gammaproteobacteria</taxon>
        <taxon>Pseudomonadales</taxon>
        <taxon>Pseudomonadaceae</taxon>
        <taxon>Azotobacter</taxon>
    </lineage>
</organism>